<organism>
    <name type="scientific">Microcystis aeruginosa</name>
    <dbReference type="NCBI Taxonomy" id="1126"/>
    <lineage>
        <taxon>Bacteria</taxon>
        <taxon>Bacillati</taxon>
        <taxon>Cyanobacteriota</taxon>
        <taxon>Cyanophyceae</taxon>
        <taxon>Oscillatoriophycideae</taxon>
        <taxon>Chroococcales</taxon>
        <taxon>Microcystaceae</taxon>
        <taxon>Microcystis</taxon>
    </lineage>
</organism>
<keyword id="KW-0028">Amino-acid biosynthesis</keyword>
<keyword id="KW-0378">Hydrolase</keyword>
<keyword id="KW-0486">Methionine biosynthesis</keyword>
<comment type="function">
    <text evidence="1">Dephosphorylates 2-hydroxy-3-keto-5-methylthiopentenyl-1-phosphate (HK-MTPenyl-1-P) yielding 1,2-dihydroxy-3-keto-5-methylthiopentene (DHK-MTPene).</text>
</comment>
<comment type="catalytic activity">
    <reaction evidence="1">
        <text>2-hydroxy-5-methylsulfanyl-3-oxopent-1-enyl phosphate + H2O = 1,2-dihydroxy-5-(methylsulfanyl)pent-1-en-3-one + phosphate</text>
        <dbReference type="Rhea" id="RHEA:14481"/>
        <dbReference type="ChEBI" id="CHEBI:15377"/>
        <dbReference type="ChEBI" id="CHEBI:43474"/>
        <dbReference type="ChEBI" id="CHEBI:49252"/>
        <dbReference type="ChEBI" id="CHEBI:59505"/>
        <dbReference type="EC" id="3.1.3.87"/>
    </reaction>
</comment>
<comment type="pathway">
    <text evidence="1">Amino-acid biosynthesis; L-methionine biosynthesis via salvage pathway; L-methionine from S-methyl-5-thio-alpha-D-ribose 1-phosphate: step 4/6.</text>
</comment>
<comment type="similarity">
    <text evidence="1">Belongs to the HAD-like hydrolase superfamily. MtnX family.</text>
</comment>
<protein>
    <recommendedName>
        <fullName evidence="1">2-hydroxy-3-keto-5-methylthiopentenyl-1-phosphate phosphatase</fullName>
        <shortName evidence="1">HK-MTPenyl-1-P phosphatase</shortName>
        <ecNumber evidence="1">3.1.3.87</ecNumber>
    </recommendedName>
</protein>
<dbReference type="EC" id="3.1.3.87" evidence="1"/>
<dbReference type="EMBL" id="AM778947">
    <property type="protein sequence ID" value="CAO90042.1"/>
    <property type="molecule type" value="Genomic_DNA"/>
</dbReference>
<dbReference type="SMR" id="A8YIE1"/>
<dbReference type="UniPathway" id="UPA00904">
    <property type="reaction ID" value="UER00877"/>
</dbReference>
<dbReference type="GO" id="GO:0005737">
    <property type="term" value="C:cytoplasm"/>
    <property type="evidence" value="ECO:0007669"/>
    <property type="project" value="TreeGrafter"/>
</dbReference>
<dbReference type="GO" id="GO:0043716">
    <property type="term" value="F:2-hydroxy-3-keto-5-methylthiopentenyl-1-phosphate phosphatase activity"/>
    <property type="evidence" value="ECO:0007669"/>
    <property type="project" value="UniProtKB-UniRule"/>
</dbReference>
<dbReference type="GO" id="GO:0036424">
    <property type="term" value="F:L-phosphoserine phosphatase activity"/>
    <property type="evidence" value="ECO:0007669"/>
    <property type="project" value="TreeGrafter"/>
</dbReference>
<dbReference type="GO" id="GO:0000287">
    <property type="term" value="F:magnesium ion binding"/>
    <property type="evidence" value="ECO:0007669"/>
    <property type="project" value="TreeGrafter"/>
</dbReference>
<dbReference type="GO" id="GO:0019509">
    <property type="term" value="P:L-methionine salvage from methylthioadenosine"/>
    <property type="evidence" value="ECO:0007669"/>
    <property type="project" value="UniProtKB-UniRule"/>
</dbReference>
<dbReference type="GO" id="GO:0006564">
    <property type="term" value="P:L-serine biosynthetic process"/>
    <property type="evidence" value="ECO:0007669"/>
    <property type="project" value="TreeGrafter"/>
</dbReference>
<dbReference type="Gene3D" id="3.90.1470.20">
    <property type="match status" value="1"/>
</dbReference>
<dbReference type="Gene3D" id="3.40.50.1000">
    <property type="entry name" value="HAD superfamily/HAD-like"/>
    <property type="match status" value="1"/>
</dbReference>
<dbReference type="HAMAP" id="MF_01680">
    <property type="entry name" value="Salvage_MtnX"/>
    <property type="match status" value="1"/>
</dbReference>
<dbReference type="InterPro" id="IPR050582">
    <property type="entry name" value="HAD-like_SerB"/>
</dbReference>
<dbReference type="InterPro" id="IPR036412">
    <property type="entry name" value="HAD-like_sf"/>
</dbReference>
<dbReference type="InterPro" id="IPR017718">
    <property type="entry name" value="HAD-SF_hydro_IB_MtnX"/>
</dbReference>
<dbReference type="InterPro" id="IPR023214">
    <property type="entry name" value="HAD_sf"/>
</dbReference>
<dbReference type="NCBIfam" id="TIGR01488">
    <property type="entry name" value="HAD-SF-IB"/>
    <property type="match status" value="1"/>
</dbReference>
<dbReference type="PANTHER" id="PTHR43344">
    <property type="entry name" value="PHOSPHOSERINE PHOSPHATASE"/>
    <property type="match status" value="1"/>
</dbReference>
<dbReference type="PANTHER" id="PTHR43344:SF21">
    <property type="entry name" value="POLYOL PHOSPHATE PHOSPHATASE PYP1"/>
    <property type="match status" value="1"/>
</dbReference>
<dbReference type="Pfam" id="PF12710">
    <property type="entry name" value="HAD"/>
    <property type="match status" value="1"/>
</dbReference>
<dbReference type="SUPFAM" id="SSF56784">
    <property type="entry name" value="HAD-like"/>
    <property type="match status" value="1"/>
</dbReference>
<reference key="1">
    <citation type="journal article" date="2008" name="BMC Genomics">
        <title>Highly plastic genome of Microcystis aeruginosa PCC 7806, a ubiquitous toxic freshwater cyanobacterium.</title>
        <authorList>
            <person name="Frangeul L."/>
            <person name="Quillardet P."/>
            <person name="Castets A.M."/>
            <person name="Humbert J.F."/>
            <person name="Matthijs H.C."/>
            <person name="Cortez D."/>
            <person name="Tolonen A."/>
            <person name="Zhang C.C."/>
            <person name="Gribaldo S."/>
            <person name="Kehr J.C."/>
            <person name="Zilliges Y."/>
            <person name="Ziemert N."/>
            <person name="Becker S."/>
            <person name="Talla E."/>
            <person name="Latifi A."/>
            <person name="Billault A."/>
            <person name="Lepelletier A."/>
            <person name="Dittmann E."/>
            <person name="Bouchier C."/>
            <person name="de Marsac N.T."/>
        </authorList>
    </citation>
    <scope>NUCLEOTIDE SEQUENCE [LARGE SCALE GENOMIC DNA]</scope>
    <source>
        <strain>PCC 7806</strain>
    </source>
</reference>
<accession>A8YIE1</accession>
<gene>
    <name evidence="1" type="primary">mtnX</name>
    <name type="ORF">IPF_2099</name>
</gene>
<sequence>MSKIVFCDFDGTITAVETFAGMLKEFAPDLSAQIMPQMYARTLSLRRGVRQLLESIPSQKYADIIAYAENKPIRPGLAEFLAFLQEQSIPFIIISGGIQGMIETVLKREGLLDKVTAIYGVNLHTQGEYLQVHSDWENETELVAKALIMDKYSGVETIAIGDSVTDITMARKADLVFARDRLIDYLQAENQPYIPWDNFFEIREYLLLRD</sequence>
<evidence type="ECO:0000255" key="1">
    <source>
        <dbReference type="HAMAP-Rule" id="MF_01680"/>
    </source>
</evidence>
<proteinExistence type="inferred from homology"/>
<feature type="chain" id="PRO_0000357488" description="2-hydroxy-3-keto-5-methylthiopentenyl-1-phosphate phosphatase">
    <location>
        <begin position="1"/>
        <end position="210"/>
    </location>
</feature>
<name>MTNX_MICAE</name>